<dbReference type="EMBL" id="AAEY01000001">
    <property type="protein sequence ID" value="EAL23423.1"/>
    <property type="molecule type" value="Genomic_DNA"/>
</dbReference>
<dbReference type="RefSeq" id="XP_778070.1">
    <property type="nucleotide sequence ID" value="XM_772977.1"/>
</dbReference>
<dbReference type="SMR" id="P0CM27"/>
<dbReference type="EnsemblFungi" id="AAW40678">
    <property type="protein sequence ID" value="AAW40678"/>
    <property type="gene ID" value="CNA00750"/>
</dbReference>
<dbReference type="GeneID" id="4933324"/>
<dbReference type="KEGG" id="cnb:CNBA0730"/>
<dbReference type="VEuPathDB" id="FungiDB:CNBA0730"/>
<dbReference type="HOGENOM" id="CLU_060354_1_2_1"/>
<dbReference type="GO" id="GO:0000781">
    <property type="term" value="C:chromosome, telomeric region"/>
    <property type="evidence" value="ECO:0007669"/>
    <property type="project" value="GOC"/>
</dbReference>
<dbReference type="GO" id="GO:0005829">
    <property type="term" value="C:cytosol"/>
    <property type="evidence" value="ECO:0007669"/>
    <property type="project" value="EnsemblFungi"/>
</dbReference>
<dbReference type="GO" id="GO:0070775">
    <property type="term" value="C:H3 histone acetyltransferase complex"/>
    <property type="evidence" value="ECO:0007669"/>
    <property type="project" value="EnsemblFungi"/>
</dbReference>
<dbReference type="GO" id="GO:0005634">
    <property type="term" value="C:nucleus"/>
    <property type="evidence" value="ECO:0007669"/>
    <property type="project" value="UniProtKB-SubCell"/>
</dbReference>
<dbReference type="GO" id="GO:0010698">
    <property type="term" value="F:acetyltransferase activator activity"/>
    <property type="evidence" value="ECO:0007669"/>
    <property type="project" value="EnsemblFungi"/>
</dbReference>
<dbReference type="GO" id="GO:0042393">
    <property type="term" value="F:histone binding"/>
    <property type="evidence" value="ECO:0007669"/>
    <property type="project" value="EnsemblFungi"/>
</dbReference>
<dbReference type="GO" id="GO:0033554">
    <property type="term" value="P:cellular response to stress"/>
    <property type="evidence" value="ECO:0007669"/>
    <property type="project" value="EnsemblFungi"/>
</dbReference>
<dbReference type="GO" id="GO:0006335">
    <property type="term" value="P:DNA replication-dependent chromatin assembly"/>
    <property type="evidence" value="ECO:0007669"/>
    <property type="project" value="EnsemblFungi"/>
</dbReference>
<dbReference type="GO" id="GO:0006337">
    <property type="term" value="P:nucleosome disassembly"/>
    <property type="evidence" value="ECO:0007669"/>
    <property type="project" value="EnsemblFungi"/>
</dbReference>
<dbReference type="GO" id="GO:0032968">
    <property type="term" value="P:positive regulation of transcription elongation by RNA polymerase II"/>
    <property type="evidence" value="ECO:0007669"/>
    <property type="project" value="EnsemblFungi"/>
</dbReference>
<dbReference type="GO" id="GO:0036211">
    <property type="term" value="P:protein modification process"/>
    <property type="evidence" value="ECO:0007669"/>
    <property type="project" value="EnsemblFungi"/>
</dbReference>
<dbReference type="GO" id="GO:0030466">
    <property type="term" value="P:silent mating-type cassette heterochromatin formation"/>
    <property type="evidence" value="ECO:0007669"/>
    <property type="project" value="EnsemblFungi"/>
</dbReference>
<dbReference type="GO" id="GO:0031509">
    <property type="term" value="P:subtelomeric heterochromatin formation"/>
    <property type="evidence" value="ECO:0007669"/>
    <property type="project" value="EnsemblFungi"/>
</dbReference>
<dbReference type="Gene3D" id="2.60.40.1490">
    <property type="entry name" value="Histone chaperone ASF1-like"/>
    <property type="match status" value="1"/>
</dbReference>
<dbReference type="InterPro" id="IPR006818">
    <property type="entry name" value="ASF1-like"/>
</dbReference>
<dbReference type="InterPro" id="IPR036747">
    <property type="entry name" value="ASF1-like_sf"/>
</dbReference>
<dbReference type="PANTHER" id="PTHR12040">
    <property type="entry name" value="ANTI-SILENCING PROTEIN 1"/>
    <property type="match status" value="1"/>
</dbReference>
<dbReference type="PANTHER" id="PTHR12040:SF0">
    <property type="entry name" value="HISTONE CHAPERONE ASF1"/>
    <property type="match status" value="1"/>
</dbReference>
<dbReference type="Pfam" id="PF04729">
    <property type="entry name" value="ASF1_hist_chap"/>
    <property type="match status" value="1"/>
</dbReference>
<dbReference type="SUPFAM" id="SSF101546">
    <property type="entry name" value="ASF1-like"/>
    <property type="match status" value="1"/>
</dbReference>
<keyword id="KW-0143">Chaperone</keyword>
<keyword id="KW-0156">Chromatin regulator</keyword>
<keyword id="KW-0539">Nucleus</keyword>
<keyword id="KW-0804">Transcription</keyword>
<keyword id="KW-0805">Transcription regulation</keyword>
<feature type="chain" id="PRO_0000410015" description="Histone chaperone ASF1">
    <location>
        <begin position="1"/>
        <end position="208"/>
    </location>
</feature>
<feature type="region of interest" description="Disordered" evidence="2">
    <location>
        <begin position="162"/>
        <end position="208"/>
    </location>
</feature>
<comment type="function">
    <text evidence="1">Histone chaperone that facilitates histone deposition and histone exchange and removal during nucleosome assembly and disassembly.</text>
</comment>
<comment type="subunit">
    <text evidence="1">Interacts with histone H3 and histone H4.</text>
</comment>
<comment type="subcellular location">
    <subcellularLocation>
        <location evidence="1">Nucleus</location>
    </subcellularLocation>
</comment>
<comment type="similarity">
    <text evidence="3">Belongs to the ASF1 family.</text>
</comment>
<proteinExistence type="inferred from homology"/>
<gene>
    <name type="primary">ASF1</name>
    <name type="ordered locus">CNBA0730</name>
</gene>
<evidence type="ECO:0000250" key="1"/>
<evidence type="ECO:0000256" key="2">
    <source>
        <dbReference type="SAM" id="MobiDB-lite"/>
    </source>
</evidence>
<evidence type="ECO:0000305" key="3"/>
<protein>
    <recommendedName>
        <fullName>Histone chaperone ASF1</fullName>
    </recommendedName>
    <alternativeName>
        <fullName>Anti-silencing function protein 1</fullName>
    </alternativeName>
</protein>
<accession>P0CM27</accession>
<accession>Q561C0</accession>
<accession>Q5KQ21</accession>
<name>ASF1_CRYNB</name>
<sequence length="208" mass="23207">MSIVNIRNIELLNNPAKFDDPYNFRIKFEAIAPLVEDLDWRLIYVGSASSEEFDQELDNCSVGPIPAGINAFDFSAPAPAHHLLPSVEPDEILGVTVIIITASYREKEFVRVGYYVNTYYEDEELKENPPSVVQWDKLHRNVLIEKPKVTRFQNNWDSAPQLNTFDGQQPAAELPPSGGNPELFNAPLPPPVQRATAAGGMDVDQPMA</sequence>
<organism>
    <name type="scientific">Cryptococcus neoformans var. neoformans serotype D (strain B-3501A)</name>
    <name type="common">Filobasidiella neoformans</name>
    <dbReference type="NCBI Taxonomy" id="283643"/>
    <lineage>
        <taxon>Eukaryota</taxon>
        <taxon>Fungi</taxon>
        <taxon>Dikarya</taxon>
        <taxon>Basidiomycota</taxon>
        <taxon>Agaricomycotina</taxon>
        <taxon>Tremellomycetes</taxon>
        <taxon>Tremellales</taxon>
        <taxon>Cryptococcaceae</taxon>
        <taxon>Cryptococcus</taxon>
        <taxon>Cryptococcus neoformans species complex</taxon>
    </lineage>
</organism>
<reference key="1">
    <citation type="journal article" date="2005" name="Science">
        <title>The genome of the basidiomycetous yeast and human pathogen Cryptococcus neoformans.</title>
        <authorList>
            <person name="Loftus B.J."/>
            <person name="Fung E."/>
            <person name="Roncaglia P."/>
            <person name="Rowley D."/>
            <person name="Amedeo P."/>
            <person name="Bruno D."/>
            <person name="Vamathevan J."/>
            <person name="Miranda M."/>
            <person name="Anderson I.J."/>
            <person name="Fraser J.A."/>
            <person name="Allen J.E."/>
            <person name="Bosdet I.E."/>
            <person name="Brent M.R."/>
            <person name="Chiu R."/>
            <person name="Doering T.L."/>
            <person name="Donlin M.J."/>
            <person name="D'Souza C.A."/>
            <person name="Fox D.S."/>
            <person name="Grinberg V."/>
            <person name="Fu J."/>
            <person name="Fukushima M."/>
            <person name="Haas B.J."/>
            <person name="Huang J.C."/>
            <person name="Janbon G."/>
            <person name="Jones S.J.M."/>
            <person name="Koo H.L."/>
            <person name="Krzywinski M.I."/>
            <person name="Kwon-Chung K.J."/>
            <person name="Lengeler K.B."/>
            <person name="Maiti R."/>
            <person name="Marra M.A."/>
            <person name="Marra R.E."/>
            <person name="Mathewson C.A."/>
            <person name="Mitchell T.G."/>
            <person name="Pertea M."/>
            <person name="Riggs F.R."/>
            <person name="Salzberg S.L."/>
            <person name="Schein J.E."/>
            <person name="Shvartsbeyn A."/>
            <person name="Shin H."/>
            <person name="Shumway M."/>
            <person name="Specht C.A."/>
            <person name="Suh B.B."/>
            <person name="Tenney A."/>
            <person name="Utterback T.R."/>
            <person name="Wickes B.L."/>
            <person name="Wortman J.R."/>
            <person name="Wye N.H."/>
            <person name="Kronstad J.W."/>
            <person name="Lodge J.K."/>
            <person name="Heitman J."/>
            <person name="Davis R.W."/>
            <person name="Fraser C.M."/>
            <person name="Hyman R.W."/>
        </authorList>
    </citation>
    <scope>NUCLEOTIDE SEQUENCE [LARGE SCALE GENOMIC DNA]</scope>
    <source>
        <strain>B-3501A</strain>
    </source>
</reference>